<comment type="function">
    <text evidence="1">Single strand-specific metallo-endoribonuclease involved in late-stage 70S ribosome quality control and in maturation of the 3' terminus of the 16S rRNA.</text>
</comment>
<comment type="cofactor">
    <cofactor evidence="1">
        <name>Zn(2+)</name>
        <dbReference type="ChEBI" id="CHEBI:29105"/>
    </cofactor>
    <text evidence="1">Binds 1 zinc ion.</text>
</comment>
<comment type="subcellular location">
    <subcellularLocation>
        <location evidence="1">Cytoplasm</location>
    </subcellularLocation>
</comment>
<comment type="similarity">
    <text evidence="1">Belongs to the endoribonuclease YbeY family.</text>
</comment>
<reference key="1">
    <citation type="journal article" date="2006" name="PLoS Genet.">
        <title>Comparative genomics of emerging human ehrlichiosis agents.</title>
        <authorList>
            <person name="Dunning Hotopp J.C."/>
            <person name="Lin M."/>
            <person name="Madupu R."/>
            <person name="Crabtree J."/>
            <person name="Angiuoli S.V."/>
            <person name="Eisen J.A."/>
            <person name="Seshadri R."/>
            <person name="Ren Q."/>
            <person name="Wu M."/>
            <person name="Utterback T.R."/>
            <person name="Smith S."/>
            <person name="Lewis M."/>
            <person name="Khouri H."/>
            <person name="Zhang C."/>
            <person name="Niu H."/>
            <person name="Lin Q."/>
            <person name="Ohashi N."/>
            <person name="Zhi N."/>
            <person name="Nelson W.C."/>
            <person name="Brinkac L.M."/>
            <person name="Dodson R.J."/>
            <person name="Rosovitz M.J."/>
            <person name="Sundaram J.P."/>
            <person name="Daugherty S.C."/>
            <person name="Davidsen T."/>
            <person name="Durkin A.S."/>
            <person name="Gwinn M.L."/>
            <person name="Haft D.H."/>
            <person name="Selengut J.D."/>
            <person name="Sullivan S.A."/>
            <person name="Zafar N."/>
            <person name="Zhou L."/>
            <person name="Benahmed F."/>
            <person name="Forberger H."/>
            <person name="Halpin R."/>
            <person name="Mulligan S."/>
            <person name="Robinson J."/>
            <person name="White O."/>
            <person name="Rikihisa Y."/>
            <person name="Tettelin H."/>
        </authorList>
    </citation>
    <scope>NUCLEOTIDE SEQUENCE [LARGE SCALE GENOMIC DNA]</scope>
    <source>
        <strain>ATCC CRL-10679 / Arkansas</strain>
    </source>
</reference>
<name>YBEY_EHRCR</name>
<evidence type="ECO:0000255" key="1">
    <source>
        <dbReference type="HAMAP-Rule" id="MF_00009"/>
    </source>
</evidence>
<feature type="chain" id="PRO_0000284202" description="Endoribonuclease YbeY">
    <location>
        <begin position="1"/>
        <end position="154"/>
    </location>
</feature>
<feature type="binding site" evidence="1">
    <location>
        <position position="113"/>
    </location>
    <ligand>
        <name>Zn(2+)</name>
        <dbReference type="ChEBI" id="CHEBI:29105"/>
        <note>catalytic</note>
    </ligand>
</feature>
<feature type="binding site" evidence="1">
    <location>
        <position position="117"/>
    </location>
    <ligand>
        <name>Zn(2+)</name>
        <dbReference type="ChEBI" id="CHEBI:29105"/>
        <note>catalytic</note>
    </ligand>
</feature>
<feature type="binding site" evidence="1">
    <location>
        <position position="123"/>
    </location>
    <ligand>
        <name>Zn(2+)</name>
        <dbReference type="ChEBI" id="CHEBI:29105"/>
        <note>catalytic</note>
    </ligand>
</feature>
<gene>
    <name evidence="1" type="primary">ybeY</name>
    <name type="ordered locus">ECH_1155</name>
</gene>
<proteinExistence type="inferred from homology"/>
<organism>
    <name type="scientific">Ehrlichia chaffeensis (strain ATCC CRL-10679 / Arkansas)</name>
    <dbReference type="NCBI Taxonomy" id="205920"/>
    <lineage>
        <taxon>Bacteria</taxon>
        <taxon>Pseudomonadati</taxon>
        <taxon>Pseudomonadota</taxon>
        <taxon>Alphaproteobacteria</taxon>
        <taxon>Rickettsiales</taxon>
        <taxon>Anaplasmataceae</taxon>
        <taxon>Ehrlichia</taxon>
    </lineage>
</organism>
<accession>Q2GF44</accession>
<sequence>MIEINIYYRKWYNIINKPKSFIKKIINTSLIDLNIYEYKPTISVVLANNRLLQKLNYEYRKKNKPTNVLSFPYNKLNKYCYLGEIFVSLDTLINESTDLNIPIEHHTSHMLIHGLLHILDYNHEEPLEQYIMESIEIKLLDKLGIKNPYVPRET</sequence>
<keyword id="KW-0963">Cytoplasm</keyword>
<keyword id="KW-0255">Endonuclease</keyword>
<keyword id="KW-0378">Hydrolase</keyword>
<keyword id="KW-0479">Metal-binding</keyword>
<keyword id="KW-0540">Nuclease</keyword>
<keyword id="KW-1185">Reference proteome</keyword>
<keyword id="KW-0690">Ribosome biogenesis</keyword>
<keyword id="KW-0698">rRNA processing</keyword>
<keyword id="KW-0862">Zinc</keyword>
<protein>
    <recommendedName>
        <fullName evidence="1">Endoribonuclease YbeY</fullName>
        <ecNumber evidence="1">3.1.-.-</ecNumber>
    </recommendedName>
</protein>
<dbReference type="EC" id="3.1.-.-" evidence="1"/>
<dbReference type="EMBL" id="CP000236">
    <property type="protein sequence ID" value="ABD45229.1"/>
    <property type="molecule type" value="Genomic_DNA"/>
</dbReference>
<dbReference type="RefSeq" id="WP_006010634.1">
    <property type="nucleotide sequence ID" value="NC_007799.1"/>
</dbReference>
<dbReference type="SMR" id="Q2GF44"/>
<dbReference type="STRING" id="205920.ECH_1155"/>
<dbReference type="KEGG" id="ech:ECH_1155"/>
<dbReference type="eggNOG" id="COG0319">
    <property type="taxonomic scope" value="Bacteria"/>
</dbReference>
<dbReference type="HOGENOM" id="CLU_106710_0_0_5"/>
<dbReference type="OrthoDB" id="9807740at2"/>
<dbReference type="Proteomes" id="UP000008320">
    <property type="component" value="Chromosome"/>
</dbReference>
<dbReference type="GO" id="GO:0005737">
    <property type="term" value="C:cytoplasm"/>
    <property type="evidence" value="ECO:0007669"/>
    <property type="project" value="UniProtKB-SubCell"/>
</dbReference>
<dbReference type="GO" id="GO:0004222">
    <property type="term" value="F:metalloendopeptidase activity"/>
    <property type="evidence" value="ECO:0007669"/>
    <property type="project" value="InterPro"/>
</dbReference>
<dbReference type="GO" id="GO:0004521">
    <property type="term" value="F:RNA endonuclease activity"/>
    <property type="evidence" value="ECO:0007669"/>
    <property type="project" value="UniProtKB-UniRule"/>
</dbReference>
<dbReference type="GO" id="GO:0008270">
    <property type="term" value="F:zinc ion binding"/>
    <property type="evidence" value="ECO:0007669"/>
    <property type="project" value="UniProtKB-UniRule"/>
</dbReference>
<dbReference type="GO" id="GO:0006364">
    <property type="term" value="P:rRNA processing"/>
    <property type="evidence" value="ECO:0007669"/>
    <property type="project" value="UniProtKB-UniRule"/>
</dbReference>
<dbReference type="Gene3D" id="3.40.390.30">
    <property type="entry name" value="Metalloproteases ('zincins'), catalytic domain"/>
    <property type="match status" value="1"/>
</dbReference>
<dbReference type="HAMAP" id="MF_00009">
    <property type="entry name" value="Endoribonucl_YbeY"/>
    <property type="match status" value="1"/>
</dbReference>
<dbReference type="InterPro" id="IPR023091">
    <property type="entry name" value="MetalPrtase_cat_dom_sf_prd"/>
</dbReference>
<dbReference type="InterPro" id="IPR002036">
    <property type="entry name" value="YbeY"/>
</dbReference>
<dbReference type="NCBIfam" id="TIGR00043">
    <property type="entry name" value="rRNA maturation RNase YbeY"/>
    <property type="match status" value="1"/>
</dbReference>
<dbReference type="PANTHER" id="PTHR46986">
    <property type="entry name" value="ENDORIBONUCLEASE YBEY, CHLOROPLASTIC"/>
    <property type="match status" value="1"/>
</dbReference>
<dbReference type="PANTHER" id="PTHR46986:SF1">
    <property type="entry name" value="ENDORIBONUCLEASE YBEY, CHLOROPLASTIC"/>
    <property type="match status" value="1"/>
</dbReference>
<dbReference type="Pfam" id="PF02130">
    <property type="entry name" value="YbeY"/>
    <property type="match status" value="1"/>
</dbReference>
<dbReference type="SUPFAM" id="SSF55486">
    <property type="entry name" value="Metalloproteases ('zincins'), catalytic domain"/>
    <property type="match status" value="1"/>
</dbReference>